<evidence type="ECO:0000255" key="1">
    <source>
        <dbReference type="HAMAP-Rule" id="MF_00236"/>
    </source>
</evidence>
<evidence type="ECO:0000256" key="2">
    <source>
        <dbReference type="SAM" id="MobiDB-lite"/>
    </source>
</evidence>
<evidence type="ECO:0000269" key="3">
    <source>
    </source>
</evidence>
<evidence type="ECO:0000305" key="4">
    <source>
    </source>
</evidence>
<proteinExistence type="evidence at protein level"/>
<organism>
    <name type="scientific">Haloferax volcanii (strain ATCC 29605 / DSM 3757 / JCM 8879 / NBRC 14742 / NCIMB 2012 / VKM B-1768 / DS2)</name>
    <name type="common">Halobacterium volcanii</name>
    <dbReference type="NCBI Taxonomy" id="309800"/>
    <lineage>
        <taxon>Archaea</taxon>
        <taxon>Methanobacteriati</taxon>
        <taxon>Methanobacteriota</taxon>
        <taxon>Stenosarchaea group</taxon>
        <taxon>Halobacteria</taxon>
        <taxon>Halobacteriales</taxon>
        <taxon>Haloferacaceae</taxon>
        <taxon>Haloferax</taxon>
    </lineage>
</organism>
<name>TATAT_HALVD</name>
<protein>
    <recommendedName>
        <fullName evidence="1">Sec-independent protein translocase protein TatAt</fullName>
    </recommendedName>
</protein>
<reference key="1">
    <citation type="journal article" date="2010" name="PLoS ONE">
        <title>The complete genome sequence of Haloferax volcanii DS2, a model archaeon.</title>
        <authorList>
            <person name="Hartman A.L."/>
            <person name="Norais C."/>
            <person name="Badger J.H."/>
            <person name="Delmas S."/>
            <person name="Haldenby S."/>
            <person name="Madupu R."/>
            <person name="Robinson J."/>
            <person name="Khouri H."/>
            <person name="Ren Q."/>
            <person name="Lowe T.M."/>
            <person name="Maupin-Furlow J."/>
            <person name="Pohlschroder M."/>
            <person name="Daniels C."/>
            <person name="Pfeiffer F."/>
            <person name="Allers T."/>
            <person name="Eisen J.A."/>
        </authorList>
    </citation>
    <scope>NUCLEOTIDE SEQUENCE [LARGE SCALE GENOMIC DNA]</scope>
    <source>
        <strain>ATCC 29605 / DSM 3757 / JCM 8879 / NBRC 14742 / NCIMB 2012 / VKM B-1768 / DS2</strain>
    </source>
</reference>
<reference key="2">
    <citation type="journal article" date="2005" name="J. Bacteriol.">
        <title>Genetic and biochemical analysis of the twin-arginine translocation pathway in halophilic archaea.</title>
        <authorList>
            <person name="Dilks K."/>
            <person name="Gimenez M.I."/>
            <person name="Pohlschroder M."/>
        </authorList>
    </citation>
    <scope>FUNCTION</scope>
    <scope>SUBUNIT</scope>
    <scope>SUBCELLULAR LOCATION</scope>
    <source>
        <strain>DS2 / DS70 / H99</strain>
    </source>
</reference>
<gene>
    <name evidence="1" type="primary">tatAt</name>
    <name type="ordered locus">HVO_1162</name>
</gene>
<dbReference type="EMBL" id="CP001956">
    <property type="protein sequence ID" value="ADE03400.1"/>
    <property type="molecule type" value="Genomic_DNA"/>
</dbReference>
<dbReference type="RefSeq" id="WP_004043779.1">
    <property type="nucleotide sequence ID" value="NC_013967.1"/>
</dbReference>
<dbReference type="SMR" id="D4GWC8"/>
<dbReference type="STRING" id="309800.HVO_1162"/>
<dbReference type="TCDB" id="2.A.64.1.7">
    <property type="family name" value="the twin arginine targeting (tat) family"/>
</dbReference>
<dbReference type="PaxDb" id="309800-C498_12933"/>
<dbReference type="EnsemblBacteria" id="ADE03400">
    <property type="protein sequence ID" value="ADE03400"/>
    <property type="gene ID" value="HVO_1162"/>
</dbReference>
<dbReference type="GeneID" id="8926877"/>
<dbReference type="KEGG" id="hvo:HVO_1162"/>
<dbReference type="eggNOG" id="arCOG02694">
    <property type="taxonomic scope" value="Archaea"/>
</dbReference>
<dbReference type="HOGENOM" id="CLU_086034_3_3_2"/>
<dbReference type="OrthoDB" id="27754at2157"/>
<dbReference type="Proteomes" id="UP000008243">
    <property type="component" value="Chromosome"/>
</dbReference>
<dbReference type="GO" id="GO:0005737">
    <property type="term" value="C:cytoplasm"/>
    <property type="evidence" value="ECO:0007669"/>
    <property type="project" value="UniProtKB-SubCell"/>
</dbReference>
<dbReference type="GO" id="GO:0033281">
    <property type="term" value="C:TAT protein transport complex"/>
    <property type="evidence" value="ECO:0007669"/>
    <property type="project" value="UniProtKB-UniRule"/>
</dbReference>
<dbReference type="GO" id="GO:0008320">
    <property type="term" value="F:protein transmembrane transporter activity"/>
    <property type="evidence" value="ECO:0007669"/>
    <property type="project" value="UniProtKB-UniRule"/>
</dbReference>
<dbReference type="GO" id="GO:0043953">
    <property type="term" value="P:protein transport by the Tat complex"/>
    <property type="evidence" value="ECO:0007669"/>
    <property type="project" value="UniProtKB-UniRule"/>
</dbReference>
<dbReference type="Gene3D" id="1.20.5.3310">
    <property type="match status" value="1"/>
</dbReference>
<dbReference type="HAMAP" id="MF_00236">
    <property type="entry name" value="TatA_E"/>
    <property type="match status" value="1"/>
</dbReference>
<dbReference type="InterPro" id="IPR003369">
    <property type="entry name" value="TatA/B/E"/>
</dbReference>
<dbReference type="InterPro" id="IPR006312">
    <property type="entry name" value="TatA/E"/>
</dbReference>
<dbReference type="NCBIfam" id="TIGR01411">
    <property type="entry name" value="tatAE"/>
    <property type="match status" value="1"/>
</dbReference>
<dbReference type="PANTHER" id="PTHR42982">
    <property type="entry name" value="SEC-INDEPENDENT PROTEIN TRANSLOCASE PROTEIN TATA"/>
    <property type="match status" value="1"/>
</dbReference>
<dbReference type="PANTHER" id="PTHR42982:SF1">
    <property type="entry name" value="SEC-INDEPENDENT PROTEIN TRANSLOCASE PROTEIN TATA"/>
    <property type="match status" value="1"/>
</dbReference>
<dbReference type="Pfam" id="PF02416">
    <property type="entry name" value="TatA_B_E"/>
    <property type="match status" value="1"/>
</dbReference>
<sequence length="91" mass="9688">MFETITPLFPGLPGGPELLVVLLIVVLLFGANKIPKLARSSGQAIGEFQRGREEIEDELQDMTGDDDEDDATSESSADSVSTDSVSTESSN</sequence>
<accession>D4GWC8</accession>
<keyword id="KW-1003">Cell membrane</keyword>
<keyword id="KW-0963">Cytoplasm</keyword>
<keyword id="KW-0472">Membrane</keyword>
<keyword id="KW-0653">Protein transport</keyword>
<keyword id="KW-1185">Reference proteome</keyword>
<keyword id="KW-0811">Translocation</keyword>
<keyword id="KW-0812">Transmembrane</keyword>
<keyword id="KW-1133">Transmembrane helix</keyword>
<keyword id="KW-0813">Transport</keyword>
<feature type="chain" id="PRO_0000417359" description="Sec-independent protein translocase protein TatAt">
    <location>
        <begin position="1"/>
        <end position="91"/>
    </location>
</feature>
<feature type="transmembrane region" description="Helical" evidence="1">
    <location>
        <begin position="9"/>
        <end position="29"/>
    </location>
</feature>
<feature type="region of interest" description="Disordered" evidence="2">
    <location>
        <begin position="48"/>
        <end position="91"/>
    </location>
</feature>
<feature type="compositionally biased region" description="Acidic residues" evidence="2">
    <location>
        <begin position="54"/>
        <end position="72"/>
    </location>
</feature>
<feature type="compositionally biased region" description="Low complexity" evidence="2">
    <location>
        <begin position="73"/>
        <end position="91"/>
    </location>
</feature>
<comment type="function">
    <text evidence="4">Part of the twin-arginine translocation (Tat) system that transports large folded proteins containing a characteristic twin-arginine motif in their signal peptide across membranes. TatA could form the protein-conducting channel of the Tat system (Probable).</text>
</comment>
<comment type="subunit">
    <text evidence="1 3">Forms a complex with TatC (By similarity). Cytoplasmic and membrane-bound TatA form high-molecular-weight complexes.</text>
</comment>
<comment type="subcellular location">
    <subcellularLocation>
        <location evidence="1 3">Cell membrane</location>
        <topology evidence="1 3">Single-pass membrane protein</topology>
    </subcellularLocation>
    <subcellularLocation>
        <location evidence="3">Cytoplasm</location>
    </subcellularLocation>
</comment>
<comment type="miscellaneous">
    <text evidence="4">H.volcanii possesses two TatA translocases: TatAo and TatAt. Each may interact with specific Tat substrates (PubMed:16291683).</text>
</comment>
<comment type="similarity">
    <text evidence="1">Belongs to the TatA/E family.</text>
</comment>